<name>BL1S1_YEAS1</name>
<sequence>MFLTFSMCVNWIIVKMPNRSEELDRLLDKIINSPHRTEASKTLQEIENNQSYILNVQLKKLLRLHDDSFKNKCVSPINYMLEKYTPYMGHTEALQKEAELVDRDLRILEMTYQLIEKNRNSK</sequence>
<keyword id="KW-0967">Endosome</keyword>
<keyword id="KW-0597">Phosphoprotein</keyword>
<keyword id="KW-0813">Transport</keyword>
<proteinExistence type="inferred from homology"/>
<dbReference type="EMBL" id="DS981519">
    <property type="protein sequence ID" value="EDV08713.1"/>
    <property type="molecule type" value="Genomic_DNA"/>
</dbReference>
<dbReference type="SMR" id="B3RHR9"/>
<dbReference type="HOGENOM" id="CLU_150164_0_0_1"/>
<dbReference type="OrthoDB" id="40475at4893"/>
<dbReference type="Proteomes" id="UP000008335">
    <property type="component" value="Unassembled WGS sequence"/>
</dbReference>
<dbReference type="GO" id="GO:0005768">
    <property type="term" value="C:endosome"/>
    <property type="evidence" value="ECO:0007669"/>
    <property type="project" value="UniProtKB-SubCell"/>
</dbReference>
<feature type="chain" id="PRO_0000410633" description="Biogenesis of lysosome-related organelles complex 1 subunit BLS1">
    <location>
        <begin position="1"/>
        <end position="122"/>
    </location>
</feature>
<feature type="modified residue" description="Phosphoserine" evidence="2">
    <location>
        <position position="33"/>
    </location>
</feature>
<reference key="1">
    <citation type="submission" date="2005-03" db="EMBL/GenBank/DDBJ databases">
        <title>Annotation of the Saccharomyces cerevisiae RM11-1a genome.</title>
        <authorList>
            <consortium name="The Broad Institute Genome Sequencing Platform"/>
            <person name="Birren B.W."/>
            <person name="Lander E.S."/>
            <person name="Galagan J.E."/>
            <person name="Nusbaum C."/>
            <person name="Devon K."/>
            <person name="Cuomo C."/>
            <person name="Jaffe D.B."/>
            <person name="Butler J."/>
            <person name="Alvarez P."/>
            <person name="Gnerre S."/>
            <person name="Grabherr M."/>
            <person name="Kleber M."/>
            <person name="Mauceli E.W."/>
            <person name="Brockman W."/>
            <person name="MacCallum I.A."/>
            <person name="Rounsley S."/>
            <person name="Young S.K."/>
            <person name="LaButti K."/>
            <person name="Pushparaj V."/>
            <person name="DeCaprio D."/>
            <person name="Crawford M."/>
            <person name="Koehrsen M."/>
            <person name="Engels R."/>
            <person name="Montgomery P."/>
            <person name="Pearson M."/>
            <person name="Howarth C."/>
            <person name="Larson L."/>
            <person name="Luoma S."/>
            <person name="White J."/>
            <person name="O'Leary S."/>
            <person name="Kodira C.D."/>
            <person name="Zeng Q."/>
            <person name="Yandava C."/>
            <person name="Alvarado L."/>
            <person name="Pratt S."/>
            <person name="Kruglyak L."/>
        </authorList>
    </citation>
    <scope>NUCLEOTIDE SEQUENCE [LARGE SCALE GENOMIC DNA]</scope>
    <source>
        <strain>RM11-1a</strain>
    </source>
</reference>
<gene>
    <name type="primary">BLS1</name>
    <name type="ORF">SCRG_04347</name>
</gene>
<evidence type="ECO:0000250" key="1"/>
<evidence type="ECO:0000250" key="2">
    <source>
        <dbReference type="UniProtKB" id="Q06071"/>
    </source>
</evidence>
<evidence type="ECO:0000305" key="3"/>
<protein>
    <recommendedName>
        <fullName>Biogenesis of lysosome-related organelles complex 1 subunit BLS1</fullName>
        <shortName>BLOC-1 subunit BLS1</shortName>
    </recommendedName>
    <alternativeName>
        <fullName>BLOS1-homolog</fullName>
    </alternativeName>
</protein>
<organism>
    <name type="scientific">Saccharomyces cerevisiae (strain RM11-1a)</name>
    <name type="common">Baker's yeast</name>
    <dbReference type="NCBI Taxonomy" id="285006"/>
    <lineage>
        <taxon>Eukaryota</taxon>
        <taxon>Fungi</taxon>
        <taxon>Dikarya</taxon>
        <taxon>Ascomycota</taxon>
        <taxon>Saccharomycotina</taxon>
        <taxon>Saccharomycetes</taxon>
        <taxon>Saccharomycetales</taxon>
        <taxon>Saccharomycetaceae</taxon>
        <taxon>Saccharomyces</taxon>
    </lineage>
</organism>
<accession>B3RHR9</accession>
<comment type="function">
    <text evidence="1">Component of the biogenesis of lysosome-related organelles complex-1 (BLOC-1), a complex involved in endosomal cargo sorting.</text>
</comment>
<comment type="subunit">
    <text evidence="1">Component of the biogenesis of lysosome-related organelles complex-1 (BLOC-1) composed of at least BLI1, BLS1, CNL1, KXD1, SNN1 and VAB2.</text>
</comment>
<comment type="subcellular location">
    <subcellularLocation>
        <location evidence="1">Endosome</location>
    </subcellularLocation>
</comment>
<comment type="similarity">
    <text evidence="3">Belongs to the BLOC1S1 family.</text>
</comment>